<dbReference type="EMBL" id="CP000395">
    <property type="protein sequence ID" value="ABH01448.1"/>
    <property type="molecule type" value="Genomic_DNA"/>
</dbReference>
<dbReference type="EMBL" id="CP002933">
    <property type="protein sequence ID" value="AEL69414.1"/>
    <property type="molecule type" value="Genomic_DNA"/>
</dbReference>
<dbReference type="RefSeq" id="WP_004790391.1">
    <property type="nucleotide sequence ID" value="NZ_CP160066.1"/>
</dbReference>
<dbReference type="SMR" id="Q0SNY0"/>
<dbReference type="STRING" id="29518.BLA32_03390"/>
<dbReference type="GeneID" id="77265023"/>
<dbReference type="KEGG" id="baf:BAPKO_0186"/>
<dbReference type="KEGG" id="bafz:BafPKo_0181"/>
<dbReference type="PATRIC" id="fig|390236.22.peg.179"/>
<dbReference type="eggNOG" id="COG1551">
    <property type="taxonomic scope" value="Bacteria"/>
</dbReference>
<dbReference type="HOGENOM" id="CLU_164837_0_2_12"/>
<dbReference type="OrthoDB" id="9809061at2"/>
<dbReference type="Proteomes" id="UP000005216">
    <property type="component" value="Chromosome"/>
</dbReference>
<dbReference type="GO" id="GO:0005829">
    <property type="term" value="C:cytosol"/>
    <property type="evidence" value="ECO:0007669"/>
    <property type="project" value="TreeGrafter"/>
</dbReference>
<dbReference type="GO" id="GO:0048027">
    <property type="term" value="F:mRNA 5'-UTR binding"/>
    <property type="evidence" value="ECO:0007669"/>
    <property type="project" value="UniProtKB-UniRule"/>
</dbReference>
<dbReference type="GO" id="GO:0044781">
    <property type="term" value="P:bacterial-type flagellum organization"/>
    <property type="evidence" value="ECO:0007669"/>
    <property type="project" value="UniProtKB-KW"/>
</dbReference>
<dbReference type="GO" id="GO:0006402">
    <property type="term" value="P:mRNA catabolic process"/>
    <property type="evidence" value="ECO:0007669"/>
    <property type="project" value="InterPro"/>
</dbReference>
<dbReference type="GO" id="GO:0045947">
    <property type="term" value="P:negative regulation of translational initiation"/>
    <property type="evidence" value="ECO:0007669"/>
    <property type="project" value="UniProtKB-UniRule"/>
</dbReference>
<dbReference type="GO" id="GO:1902208">
    <property type="term" value="P:regulation of bacterial-type flagellum assembly"/>
    <property type="evidence" value="ECO:0007669"/>
    <property type="project" value="UniProtKB-UniRule"/>
</dbReference>
<dbReference type="GO" id="GO:0006109">
    <property type="term" value="P:regulation of carbohydrate metabolic process"/>
    <property type="evidence" value="ECO:0007669"/>
    <property type="project" value="InterPro"/>
</dbReference>
<dbReference type="FunFam" id="2.60.40.4380:FF:000002">
    <property type="entry name" value="Translational regulator CsrA"/>
    <property type="match status" value="1"/>
</dbReference>
<dbReference type="Gene3D" id="2.60.40.4380">
    <property type="entry name" value="Translational regulator CsrA"/>
    <property type="match status" value="1"/>
</dbReference>
<dbReference type="HAMAP" id="MF_00167">
    <property type="entry name" value="CsrA"/>
    <property type="match status" value="1"/>
</dbReference>
<dbReference type="InterPro" id="IPR003751">
    <property type="entry name" value="CsrA"/>
</dbReference>
<dbReference type="InterPro" id="IPR036107">
    <property type="entry name" value="CsrA_sf"/>
</dbReference>
<dbReference type="NCBIfam" id="TIGR00202">
    <property type="entry name" value="csrA"/>
    <property type="match status" value="1"/>
</dbReference>
<dbReference type="PANTHER" id="PTHR34984">
    <property type="entry name" value="CARBON STORAGE REGULATOR"/>
    <property type="match status" value="1"/>
</dbReference>
<dbReference type="PANTHER" id="PTHR34984:SF1">
    <property type="entry name" value="CARBON STORAGE REGULATOR"/>
    <property type="match status" value="1"/>
</dbReference>
<dbReference type="Pfam" id="PF02599">
    <property type="entry name" value="CsrA"/>
    <property type="match status" value="1"/>
</dbReference>
<dbReference type="SUPFAM" id="SSF117130">
    <property type="entry name" value="CsrA-like"/>
    <property type="match status" value="1"/>
</dbReference>
<feature type="chain" id="PRO_1000023365" description="Translational regulator CsrA">
    <location>
        <begin position="1"/>
        <end position="81"/>
    </location>
</feature>
<sequence length="81" mass="9557">MLVLSRKVNESIKINSNIEVLILEIKKDTVKIAIKAPENIKIFRSEIYEFIIEENKKSILKDKHNIGKIKSLFNHYFKNEN</sequence>
<reference key="1">
    <citation type="journal article" date="2006" name="BMC Genomics">
        <title>Comparative genome analysis: selection pressure on the Borrelia vls cassettes is essential for infectivity.</title>
        <authorList>
            <person name="Gloeckner G."/>
            <person name="Schulte-Spechtel U."/>
            <person name="Schilhabel M."/>
            <person name="Felder M."/>
            <person name="Suehnel J."/>
            <person name="Wilske B."/>
            <person name="Platzer M."/>
        </authorList>
    </citation>
    <scope>NUCLEOTIDE SEQUENCE [LARGE SCALE GENOMIC DNA]</scope>
    <source>
        <strain>PKo</strain>
    </source>
</reference>
<reference key="2">
    <citation type="journal article" date="2011" name="J. Bacteriol.">
        <title>Whole-genome sequences of two Borrelia afzelii and two Borrelia garinii Lyme disease agent isolates.</title>
        <authorList>
            <person name="Casjens S.R."/>
            <person name="Mongodin E.F."/>
            <person name="Qiu W.G."/>
            <person name="Dunn J.J."/>
            <person name="Luft B.J."/>
            <person name="Fraser-Liggett C.M."/>
            <person name="Schutzer S.E."/>
        </authorList>
    </citation>
    <scope>NUCLEOTIDE SEQUENCE [LARGE SCALE GENOMIC DNA]</scope>
    <source>
        <strain>PKo</strain>
    </source>
</reference>
<organism>
    <name type="scientific">Borreliella afzelii (strain PKo)</name>
    <name type="common">Borrelia afzelii</name>
    <dbReference type="NCBI Taxonomy" id="390236"/>
    <lineage>
        <taxon>Bacteria</taxon>
        <taxon>Pseudomonadati</taxon>
        <taxon>Spirochaetota</taxon>
        <taxon>Spirochaetia</taxon>
        <taxon>Spirochaetales</taxon>
        <taxon>Borreliaceae</taxon>
        <taxon>Borreliella</taxon>
    </lineage>
</organism>
<comment type="function">
    <text evidence="1">A translational regulator that binds mRNA to regulate translation initiation and/or mRNA stability. Usually binds in the 5'-UTR at or near the Shine-Dalgarno sequence preventing ribosome-binding, thus repressing translation. Its main target seems to be the major flagellin gene, while its function is anatagonized by FliW.</text>
</comment>
<comment type="subunit">
    <text evidence="1">Homodimer; the beta-strands of each monomer intercalate to form a hydrophobic core, while the alpha-helices form wings that extend away from the core.</text>
</comment>
<comment type="subcellular location">
    <subcellularLocation>
        <location evidence="1">Cytoplasm</location>
    </subcellularLocation>
</comment>
<comment type="similarity">
    <text evidence="1">Belongs to the CsrA/RsmA family.</text>
</comment>
<protein>
    <recommendedName>
        <fullName evidence="1">Translational regulator CsrA</fullName>
    </recommendedName>
</protein>
<gene>
    <name evidence="1" type="primary">csrA</name>
    <name type="ordered locus">BAPKO_0186</name>
    <name type="ordered locus">BafPKo_0181</name>
</gene>
<name>CSRA_BORAP</name>
<accession>Q0SNY0</accession>
<accession>G0IR28</accession>
<evidence type="ECO:0000255" key="1">
    <source>
        <dbReference type="HAMAP-Rule" id="MF_00167"/>
    </source>
</evidence>
<proteinExistence type="inferred from homology"/>
<keyword id="KW-1005">Bacterial flagellum biogenesis</keyword>
<keyword id="KW-0963">Cytoplasm</keyword>
<keyword id="KW-0678">Repressor</keyword>
<keyword id="KW-0694">RNA-binding</keyword>
<keyword id="KW-0810">Translation regulation</keyword>